<dbReference type="EC" id="3.6.1.58" evidence="2"/>
<dbReference type="EMBL" id="AK026147">
    <property type="protein sequence ID" value="BAB15376.1"/>
    <property type="molecule type" value="mRNA"/>
</dbReference>
<dbReference type="EMBL" id="AK124446">
    <property type="protein sequence ID" value="BAC85853.1"/>
    <property type="status" value="ALT_INIT"/>
    <property type="molecule type" value="mRNA"/>
</dbReference>
<dbReference type="EMBL" id="BC016902">
    <property type="protein sequence ID" value="AAH16902.1"/>
    <property type="molecule type" value="mRNA"/>
</dbReference>
<dbReference type="CCDS" id="CCDS75706.1">
    <molecule id="Q6ZVK8-1"/>
</dbReference>
<dbReference type="RefSeq" id="NP_079091.3">
    <molecule id="Q6ZVK8-1"/>
    <property type="nucleotide sequence ID" value="NM_024815.3"/>
</dbReference>
<dbReference type="PDB" id="3GG6">
    <property type="method" value="X-ray"/>
    <property type="resolution" value="2.10 A"/>
    <property type="chains" value="A=26-179"/>
</dbReference>
<dbReference type="PDB" id="4HVY">
    <property type="method" value="X-ray"/>
    <property type="resolution" value="1.46 A"/>
    <property type="chains" value="A=26-179"/>
</dbReference>
<dbReference type="PDBsum" id="3GG6"/>
<dbReference type="PDBsum" id="4HVY"/>
<dbReference type="SMR" id="Q6ZVK8"/>
<dbReference type="BioGRID" id="122961">
    <property type="interactions" value="53"/>
</dbReference>
<dbReference type="FunCoup" id="Q6ZVK8">
    <property type="interactions" value="1074"/>
</dbReference>
<dbReference type="IntAct" id="Q6ZVK8">
    <property type="interactions" value="44"/>
</dbReference>
<dbReference type="MINT" id="Q6ZVK8"/>
<dbReference type="STRING" id="9606.ENSP00000480722"/>
<dbReference type="iPTMnet" id="Q6ZVK8"/>
<dbReference type="PhosphoSitePlus" id="Q6ZVK8"/>
<dbReference type="BioMuta" id="NUDT18"/>
<dbReference type="DMDM" id="460018323"/>
<dbReference type="jPOST" id="Q6ZVK8"/>
<dbReference type="MassIVE" id="Q6ZVK8"/>
<dbReference type="PaxDb" id="9606-ENSP00000480722"/>
<dbReference type="PeptideAtlas" id="Q6ZVK8"/>
<dbReference type="ProteomicsDB" id="68421">
    <molecule id="Q6ZVK8-1"/>
</dbReference>
<dbReference type="ProteomicsDB" id="68422">
    <molecule id="Q6ZVK8-2"/>
</dbReference>
<dbReference type="Pumba" id="Q6ZVK8"/>
<dbReference type="Antibodypedia" id="74437">
    <property type="antibodies" value="188 antibodies from 21 providers"/>
</dbReference>
<dbReference type="DNASU" id="79873"/>
<dbReference type="Ensembl" id="ENST00000611621.2">
    <molecule id="Q6ZVK8-1"/>
    <property type="protein sequence ID" value="ENSP00000480722.1"/>
    <property type="gene ID" value="ENSG00000275074.3"/>
</dbReference>
<dbReference type="GeneID" id="79873"/>
<dbReference type="KEGG" id="hsa:79873"/>
<dbReference type="MANE-Select" id="ENST00000611621.2">
    <property type="protein sequence ID" value="ENSP00000480722.1"/>
    <property type="RefSeq nucleotide sequence ID" value="NM_024815.4"/>
    <property type="RefSeq protein sequence ID" value="NP_079091.3"/>
</dbReference>
<dbReference type="UCSC" id="uc033beu.2">
    <molecule id="Q6ZVK8-1"/>
    <property type="organism name" value="human"/>
</dbReference>
<dbReference type="AGR" id="HGNC:26194"/>
<dbReference type="CTD" id="79873"/>
<dbReference type="DisGeNET" id="79873"/>
<dbReference type="GeneCards" id="NUDT18"/>
<dbReference type="HGNC" id="HGNC:26194">
    <property type="gene designation" value="NUDT18"/>
</dbReference>
<dbReference type="HPA" id="ENSG00000275074">
    <property type="expression patterns" value="Low tissue specificity"/>
</dbReference>
<dbReference type="MIM" id="615791">
    <property type="type" value="gene"/>
</dbReference>
<dbReference type="neXtProt" id="NX_Q6ZVK8"/>
<dbReference type="OpenTargets" id="ENSG00000275074"/>
<dbReference type="PharmGKB" id="PA142671238"/>
<dbReference type="VEuPathDB" id="HostDB:ENSG00000275074"/>
<dbReference type="eggNOG" id="KOG0648">
    <property type="taxonomic scope" value="Eukaryota"/>
</dbReference>
<dbReference type="GeneTree" id="ENSGT00390000002931"/>
<dbReference type="HOGENOM" id="CLU_061042_2_0_1"/>
<dbReference type="InParanoid" id="Q6ZVK8"/>
<dbReference type="OMA" id="FPTCEIN"/>
<dbReference type="OrthoDB" id="10005910at2759"/>
<dbReference type="PAN-GO" id="Q6ZVK8">
    <property type="GO annotations" value="3 GO annotations based on evolutionary models"/>
</dbReference>
<dbReference type="PhylomeDB" id="Q6ZVK8"/>
<dbReference type="TreeFam" id="TF106355"/>
<dbReference type="BioCyc" id="MetaCyc:ENSG00000173566-MONOMER"/>
<dbReference type="PathwayCommons" id="Q6ZVK8"/>
<dbReference type="Reactome" id="R-HSA-2393930">
    <molecule id="Q6ZVK8-1"/>
    <property type="pathway name" value="Phosphate bond hydrolysis by NUDT proteins"/>
</dbReference>
<dbReference type="SABIO-RK" id="Q6ZVK8"/>
<dbReference type="SignaLink" id="Q6ZVK8"/>
<dbReference type="BioGRID-ORCS" id="79873">
    <property type="hits" value="12 hits in 361 CRISPR screens"/>
</dbReference>
<dbReference type="EvolutionaryTrace" id="Q6ZVK8"/>
<dbReference type="GenomeRNAi" id="79873"/>
<dbReference type="Pharos" id="Q6ZVK8">
    <property type="development level" value="Tbio"/>
</dbReference>
<dbReference type="PRO" id="PR:Q6ZVK8"/>
<dbReference type="Proteomes" id="UP000005640">
    <property type="component" value="Chromosome 8"/>
</dbReference>
<dbReference type="RNAct" id="Q6ZVK8">
    <property type="molecule type" value="protein"/>
</dbReference>
<dbReference type="Bgee" id="ENSG00000275074">
    <property type="expression patterns" value="Expressed in male germ line stem cell (sensu Vertebrata) in testis and 119 other cell types or tissues"/>
</dbReference>
<dbReference type="ExpressionAtlas" id="Q6ZVK8">
    <property type="expression patterns" value="baseline and differential"/>
</dbReference>
<dbReference type="GO" id="GO:0005829">
    <property type="term" value="C:cytosol"/>
    <property type="evidence" value="ECO:0000304"/>
    <property type="project" value="Reactome"/>
</dbReference>
<dbReference type="GO" id="GO:0044717">
    <property type="term" value="F:8-hydroxy-dADP phosphatase activity"/>
    <property type="evidence" value="ECO:0000314"/>
    <property type="project" value="UniProtKB"/>
</dbReference>
<dbReference type="GO" id="GO:0044715">
    <property type="term" value="F:8-oxo-dGDP phosphatase activity"/>
    <property type="evidence" value="ECO:0000314"/>
    <property type="project" value="UniProtKB"/>
</dbReference>
<dbReference type="GO" id="GO:0044716">
    <property type="term" value="F:8-oxo-GDP phosphatase activity"/>
    <property type="evidence" value="ECO:0000314"/>
    <property type="project" value="UniProtKB"/>
</dbReference>
<dbReference type="GO" id="GO:0046872">
    <property type="term" value="F:metal ion binding"/>
    <property type="evidence" value="ECO:0007669"/>
    <property type="project" value="UniProtKB-KW"/>
</dbReference>
<dbReference type="GO" id="GO:0046057">
    <property type="term" value="P:dADP catabolic process"/>
    <property type="evidence" value="ECO:0000314"/>
    <property type="project" value="UniProtKB"/>
</dbReference>
<dbReference type="GO" id="GO:0046067">
    <property type="term" value="P:dGDP catabolic process"/>
    <property type="evidence" value="ECO:0000314"/>
    <property type="project" value="UniProtKB"/>
</dbReference>
<dbReference type="GO" id="GO:0046712">
    <property type="term" value="P:GDP catabolic process"/>
    <property type="evidence" value="ECO:0000314"/>
    <property type="project" value="UniProtKB"/>
</dbReference>
<dbReference type="GO" id="GO:0055086">
    <property type="term" value="P:nucleobase-containing small molecule metabolic process"/>
    <property type="evidence" value="ECO:0000304"/>
    <property type="project" value="Reactome"/>
</dbReference>
<dbReference type="CDD" id="cd04671">
    <property type="entry name" value="NUDIX_8DGDPP_Nudt18"/>
    <property type="match status" value="1"/>
</dbReference>
<dbReference type="FunFam" id="3.90.79.10:FF:000080">
    <property type="entry name" value="8-oxo-dGDP phosphatase NUDT18"/>
    <property type="match status" value="1"/>
</dbReference>
<dbReference type="Gene3D" id="3.90.79.10">
    <property type="entry name" value="Nucleoside Triphosphate Pyrophosphohydrolase"/>
    <property type="match status" value="1"/>
</dbReference>
<dbReference type="InterPro" id="IPR020476">
    <property type="entry name" value="Nudix_hydrolase"/>
</dbReference>
<dbReference type="InterPro" id="IPR015797">
    <property type="entry name" value="NUDIX_hydrolase-like_dom_sf"/>
</dbReference>
<dbReference type="InterPro" id="IPR020084">
    <property type="entry name" value="NUDIX_hydrolase_CS"/>
</dbReference>
<dbReference type="InterPro" id="IPR000086">
    <property type="entry name" value="NUDIX_hydrolase_dom"/>
</dbReference>
<dbReference type="InterPro" id="IPR042970">
    <property type="entry name" value="NUDT18_NUDIX"/>
</dbReference>
<dbReference type="PANTHER" id="PTHR22769:SF56">
    <property type="entry name" value="8-OXO-DGDP PHOSPHATASE NUDT18"/>
    <property type="match status" value="1"/>
</dbReference>
<dbReference type="PANTHER" id="PTHR22769">
    <property type="entry name" value="MUTT/NUDIX HYDROLASE"/>
    <property type="match status" value="1"/>
</dbReference>
<dbReference type="Pfam" id="PF00293">
    <property type="entry name" value="NUDIX"/>
    <property type="match status" value="1"/>
</dbReference>
<dbReference type="PRINTS" id="PR00502">
    <property type="entry name" value="NUDIXFAMILY"/>
</dbReference>
<dbReference type="SUPFAM" id="SSF55811">
    <property type="entry name" value="Nudix"/>
    <property type="match status" value="1"/>
</dbReference>
<dbReference type="PROSITE" id="PS51462">
    <property type="entry name" value="NUDIX"/>
    <property type="match status" value="1"/>
</dbReference>
<dbReference type="PROSITE" id="PS00893">
    <property type="entry name" value="NUDIX_BOX"/>
    <property type="match status" value="1"/>
</dbReference>
<feature type="chain" id="PRO_0000324567" description="8-oxo-dGDP phosphatase NUDT18">
    <location>
        <begin position="1"/>
        <end position="323"/>
    </location>
</feature>
<feature type="domain" description="Nudix hydrolase" evidence="1">
    <location>
        <begin position="37"/>
        <end position="167"/>
    </location>
</feature>
<feature type="short sequence motif" description="Nudix box">
    <location>
        <begin position="76"/>
        <end position="97"/>
    </location>
</feature>
<feature type="binding site" evidence="9">
    <location>
        <position position="58"/>
    </location>
    <ligand>
        <name>Mg(2+)</name>
        <dbReference type="ChEBI" id="CHEBI:18420"/>
    </ligand>
</feature>
<feature type="splice variant" id="VSP_032276" description="In isoform 2." evidence="3">
    <location>
        <begin position="1"/>
        <end position="100"/>
    </location>
</feature>
<feature type="splice variant" id="VSP_032277" description="In isoform 2." evidence="3">
    <original>EPETLLSVEERGPSWVRFVFLARPT</original>
    <variation>MSVDSARAALLSTQTLPAPSPTSPP</variation>
    <location>
        <begin position="101"/>
        <end position="125"/>
    </location>
</feature>
<feature type="sequence conflict" description="In Ref. 1; BAB15376." evidence="5" ref="1">
    <original>L</original>
    <variation>P</variation>
    <location>
        <position position="177"/>
    </location>
</feature>
<feature type="sequence conflict" description="In Ref. 1; BAB15376/BAC85853." evidence="5" ref="1">
    <original>M</original>
    <variation>V</variation>
    <location>
        <position position="224"/>
    </location>
</feature>
<feature type="strand" evidence="11">
    <location>
        <begin position="43"/>
        <end position="49"/>
    </location>
</feature>
<feature type="strand" evidence="11">
    <location>
        <begin position="55"/>
        <end position="61"/>
    </location>
</feature>
<feature type="helix" evidence="11">
    <location>
        <begin position="65"/>
        <end position="67"/>
    </location>
</feature>
<feature type="strand" evidence="11">
    <location>
        <begin position="74"/>
        <end position="77"/>
    </location>
</feature>
<feature type="helix" evidence="11">
    <location>
        <begin position="84"/>
        <end position="96"/>
    </location>
</feature>
<feature type="strand" evidence="11">
    <location>
        <begin position="98"/>
        <end position="112"/>
    </location>
</feature>
<feature type="strand" evidence="11">
    <location>
        <begin position="115"/>
        <end position="127"/>
    </location>
</feature>
<feature type="helix" evidence="11">
    <location>
        <begin position="132"/>
        <end position="134"/>
    </location>
</feature>
<feature type="strand" evidence="10">
    <location>
        <begin position="136"/>
        <end position="138"/>
    </location>
</feature>
<feature type="strand" evidence="11">
    <location>
        <begin position="140"/>
        <end position="146"/>
    </location>
</feature>
<feature type="strand" evidence="11">
    <location>
        <begin position="152"/>
        <end position="155"/>
    </location>
</feature>
<feature type="helix" evidence="11">
    <location>
        <begin position="158"/>
        <end position="172"/>
    </location>
</feature>
<reference key="1">
    <citation type="journal article" date="2004" name="Nat. Genet.">
        <title>Complete sequencing and characterization of 21,243 full-length human cDNAs.</title>
        <authorList>
            <person name="Ota T."/>
            <person name="Suzuki Y."/>
            <person name="Nishikawa T."/>
            <person name="Otsuki T."/>
            <person name="Sugiyama T."/>
            <person name="Irie R."/>
            <person name="Wakamatsu A."/>
            <person name="Hayashi K."/>
            <person name="Sato H."/>
            <person name="Nagai K."/>
            <person name="Kimura K."/>
            <person name="Makita H."/>
            <person name="Sekine M."/>
            <person name="Obayashi M."/>
            <person name="Nishi T."/>
            <person name="Shibahara T."/>
            <person name="Tanaka T."/>
            <person name="Ishii S."/>
            <person name="Yamamoto J."/>
            <person name="Saito K."/>
            <person name="Kawai Y."/>
            <person name="Isono Y."/>
            <person name="Nakamura Y."/>
            <person name="Nagahari K."/>
            <person name="Murakami K."/>
            <person name="Yasuda T."/>
            <person name="Iwayanagi T."/>
            <person name="Wagatsuma M."/>
            <person name="Shiratori A."/>
            <person name="Sudo H."/>
            <person name="Hosoiri T."/>
            <person name="Kaku Y."/>
            <person name="Kodaira H."/>
            <person name="Kondo H."/>
            <person name="Sugawara M."/>
            <person name="Takahashi M."/>
            <person name="Kanda K."/>
            <person name="Yokoi T."/>
            <person name="Furuya T."/>
            <person name="Kikkawa E."/>
            <person name="Omura Y."/>
            <person name="Abe K."/>
            <person name="Kamihara K."/>
            <person name="Katsuta N."/>
            <person name="Sato K."/>
            <person name="Tanikawa M."/>
            <person name="Yamazaki M."/>
            <person name="Ninomiya K."/>
            <person name="Ishibashi T."/>
            <person name="Yamashita H."/>
            <person name="Murakawa K."/>
            <person name="Fujimori K."/>
            <person name="Tanai H."/>
            <person name="Kimata M."/>
            <person name="Watanabe M."/>
            <person name="Hiraoka S."/>
            <person name="Chiba Y."/>
            <person name="Ishida S."/>
            <person name="Ono Y."/>
            <person name="Takiguchi S."/>
            <person name="Watanabe S."/>
            <person name="Yosida M."/>
            <person name="Hotuta T."/>
            <person name="Kusano J."/>
            <person name="Kanehori K."/>
            <person name="Takahashi-Fujii A."/>
            <person name="Hara H."/>
            <person name="Tanase T.-O."/>
            <person name="Nomura Y."/>
            <person name="Togiya S."/>
            <person name="Komai F."/>
            <person name="Hara R."/>
            <person name="Takeuchi K."/>
            <person name="Arita M."/>
            <person name="Imose N."/>
            <person name="Musashino K."/>
            <person name="Yuuki H."/>
            <person name="Oshima A."/>
            <person name="Sasaki N."/>
            <person name="Aotsuka S."/>
            <person name="Yoshikawa Y."/>
            <person name="Matsunawa H."/>
            <person name="Ichihara T."/>
            <person name="Shiohata N."/>
            <person name="Sano S."/>
            <person name="Moriya S."/>
            <person name="Momiyama H."/>
            <person name="Satoh N."/>
            <person name="Takami S."/>
            <person name="Terashima Y."/>
            <person name="Suzuki O."/>
            <person name="Nakagawa S."/>
            <person name="Senoh A."/>
            <person name="Mizoguchi H."/>
            <person name="Goto Y."/>
            <person name="Shimizu F."/>
            <person name="Wakebe H."/>
            <person name="Hishigaki H."/>
            <person name="Watanabe T."/>
            <person name="Sugiyama A."/>
            <person name="Takemoto M."/>
            <person name="Kawakami B."/>
            <person name="Yamazaki M."/>
            <person name="Watanabe K."/>
            <person name="Kumagai A."/>
            <person name="Itakura S."/>
            <person name="Fukuzumi Y."/>
            <person name="Fujimori Y."/>
            <person name="Komiyama M."/>
            <person name="Tashiro H."/>
            <person name="Tanigami A."/>
            <person name="Fujiwara T."/>
            <person name="Ono T."/>
            <person name="Yamada K."/>
            <person name="Fujii Y."/>
            <person name="Ozaki K."/>
            <person name="Hirao M."/>
            <person name="Ohmori Y."/>
            <person name="Kawabata A."/>
            <person name="Hikiji T."/>
            <person name="Kobatake N."/>
            <person name="Inagaki H."/>
            <person name="Ikema Y."/>
            <person name="Okamoto S."/>
            <person name="Okitani R."/>
            <person name="Kawakami T."/>
            <person name="Noguchi S."/>
            <person name="Itoh T."/>
            <person name="Shigeta K."/>
            <person name="Senba T."/>
            <person name="Matsumura K."/>
            <person name="Nakajima Y."/>
            <person name="Mizuno T."/>
            <person name="Morinaga M."/>
            <person name="Sasaki M."/>
            <person name="Togashi T."/>
            <person name="Oyama M."/>
            <person name="Hata H."/>
            <person name="Watanabe M."/>
            <person name="Komatsu T."/>
            <person name="Mizushima-Sugano J."/>
            <person name="Satoh T."/>
            <person name="Shirai Y."/>
            <person name="Takahashi Y."/>
            <person name="Nakagawa K."/>
            <person name="Okumura K."/>
            <person name="Nagase T."/>
            <person name="Nomura N."/>
            <person name="Kikuchi H."/>
            <person name="Masuho Y."/>
            <person name="Yamashita R."/>
            <person name="Nakai K."/>
            <person name="Yada T."/>
            <person name="Nakamura Y."/>
            <person name="Ohara O."/>
            <person name="Isogai T."/>
            <person name="Sugano S."/>
        </authorList>
    </citation>
    <scope>NUCLEOTIDE SEQUENCE [LARGE SCALE MRNA] (ISOFORMS 1 AND 2)</scope>
    <source>
        <tissue>Cerebellum</tissue>
    </source>
</reference>
<reference key="2">
    <citation type="journal article" date="2006" name="Nature">
        <title>DNA sequence and analysis of human chromosome 8.</title>
        <authorList>
            <person name="Nusbaum C."/>
            <person name="Mikkelsen T.S."/>
            <person name="Zody M.C."/>
            <person name="Asakawa S."/>
            <person name="Taudien S."/>
            <person name="Garber M."/>
            <person name="Kodira C.D."/>
            <person name="Schueler M.G."/>
            <person name="Shimizu A."/>
            <person name="Whittaker C.A."/>
            <person name="Chang J.L."/>
            <person name="Cuomo C.A."/>
            <person name="Dewar K."/>
            <person name="FitzGerald M.G."/>
            <person name="Yang X."/>
            <person name="Allen N.R."/>
            <person name="Anderson S."/>
            <person name="Asakawa T."/>
            <person name="Blechschmidt K."/>
            <person name="Bloom T."/>
            <person name="Borowsky M.L."/>
            <person name="Butler J."/>
            <person name="Cook A."/>
            <person name="Corum B."/>
            <person name="DeArellano K."/>
            <person name="DeCaprio D."/>
            <person name="Dooley K.T."/>
            <person name="Dorris L. III"/>
            <person name="Engels R."/>
            <person name="Gloeckner G."/>
            <person name="Hafez N."/>
            <person name="Hagopian D.S."/>
            <person name="Hall J.L."/>
            <person name="Ishikawa S.K."/>
            <person name="Jaffe D.B."/>
            <person name="Kamat A."/>
            <person name="Kudoh J."/>
            <person name="Lehmann R."/>
            <person name="Lokitsang T."/>
            <person name="Macdonald P."/>
            <person name="Major J.E."/>
            <person name="Matthews C.D."/>
            <person name="Mauceli E."/>
            <person name="Menzel U."/>
            <person name="Mihalev A.H."/>
            <person name="Minoshima S."/>
            <person name="Murayama Y."/>
            <person name="Naylor J.W."/>
            <person name="Nicol R."/>
            <person name="Nguyen C."/>
            <person name="O'Leary S.B."/>
            <person name="O'Neill K."/>
            <person name="Parker S.C.J."/>
            <person name="Polley A."/>
            <person name="Raymond C.K."/>
            <person name="Reichwald K."/>
            <person name="Rodriguez J."/>
            <person name="Sasaki T."/>
            <person name="Schilhabel M."/>
            <person name="Siddiqui R."/>
            <person name="Smith C.L."/>
            <person name="Sneddon T.P."/>
            <person name="Talamas J.A."/>
            <person name="Tenzin P."/>
            <person name="Topham K."/>
            <person name="Venkataraman V."/>
            <person name="Wen G."/>
            <person name="Yamazaki S."/>
            <person name="Young S.K."/>
            <person name="Zeng Q."/>
            <person name="Zimmer A.R."/>
            <person name="Rosenthal A."/>
            <person name="Birren B.W."/>
            <person name="Platzer M."/>
            <person name="Shimizu N."/>
            <person name="Lander E.S."/>
        </authorList>
    </citation>
    <scope>NUCLEOTIDE SEQUENCE [LARGE SCALE GENOMIC DNA]</scope>
</reference>
<reference key="3">
    <citation type="journal article" date="2004" name="Genome Res.">
        <title>The status, quality, and expansion of the NIH full-length cDNA project: the Mammalian Gene Collection (MGC).</title>
        <authorList>
            <consortium name="The MGC Project Team"/>
        </authorList>
    </citation>
    <scope>NUCLEOTIDE SEQUENCE [LARGE SCALE MRNA] (ISOFORM 1)</scope>
    <source>
        <tissue>Uterus</tissue>
    </source>
</reference>
<reference key="4">
    <citation type="journal article" date="2012" name="J. Biol. Chem.">
        <title>Human MTH3 (NUDT18) protein hydrolyzes oxidized forms of guanosine and deoxyguanosine diphosphates: comparison with MTH1 and MTH2.</title>
        <authorList>
            <person name="Takagi Y."/>
            <person name="Setoyama D."/>
            <person name="Ito R."/>
            <person name="Kamiya H."/>
            <person name="Yamagata Y."/>
            <person name="Sekiguchi M."/>
        </authorList>
    </citation>
    <scope>CATALYTIC ACTIVITY</scope>
    <scope>BIOPHYSICOCHEMICAL PROPERTIES</scope>
    <scope>COFACTOR</scope>
    <scope>FUNCTION</scope>
</reference>
<reference evidence="8" key="5">
    <citation type="submission" date="2009-03" db="PDB data bank">
        <title>Crystal structure of the nudix domain of human nudt18.</title>
        <authorList>
            <consortium name="Structural genomics consortium (SGC)"/>
        </authorList>
    </citation>
    <scope>X-RAY CRYSTALLOGRAPHY (2.1 ANGSTROMS) OF 26-179</scope>
</reference>
<reference evidence="9" key="6">
    <citation type="journal article" date="2013" name="Nat. Commun.">
        <title>Engineering protein thermostability using a generic activity-independent biophysical screen inside the cell.</title>
        <authorList>
            <person name="Asial I."/>
            <person name="Cheng Y.X."/>
            <person name="Engman H."/>
            <person name="Dollhopf M."/>
            <person name="Wu B."/>
            <person name="Nordlund P."/>
            <person name="Cornvik T."/>
        </authorList>
    </citation>
    <scope>X-RAY CRYSTALLOGRAPHY (1.46 ANGSTROMS) OF 26-179 IN COMPLEX WITH MG(2+)</scope>
</reference>
<protein>
    <recommendedName>
        <fullName evidence="6">8-oxo-dGDP phosphatase NUDT18</fullName>
        <ecNumber evidence="2">3.6.1.58</ecNumber>
    </recommendedName>
    <alternativeName>
        <fullName>2-hydroxy-dADP phosphatase</fullName>
    </alternativeName>
    <alternativeName>
        <fullName>7,8-dihydro-8-oxoguanine phosphatase</fullName>
    </alternativeName>
    <alternativeName>
        <fullName evidence="4">MutT homolog 3</fullName>
    </alternativeName>
    <alternativeName>
        <fullName>Nucleoside diphosphate-linked moiety X motif 18</fullName>
        <shortName>Nudix motif 18</shortName>
    </alternativeName>
</protein>
<organism>
    <name type="scientific">Homo sapiens</name>
    <name type="common">Human</name>
    <dbReference type="NCBI Taxonomy" id="9606"/>
    <lineage>
        <taxon>Eukaryota</taxon>
        <taxon>Metazoa</taxon>
        <taxon>Chordata</taxon>
        <taxon>Craniata</taxon>
        <taxon>Vertebrata</taxon>
        <taxon>Euteleostomi</taxon>
        <taxon>Mammalia</taxon>
        <taxon>Eutheria</taxon>
        <taxon>Euarchontoglires</taxon>
        <taxon>Primates</taxon>
        <taxon>Haplorrhini</taxon>
        <taxon>Catarrhini</taxon>
        <taxon>Hominidae</taxon>
        <taxon>Homo</taxon>
    </lineage>
</organism>
<name>NUD18_HUMAN</name>
<evidence type="ECO:0000255" key="1">
    <source>
        <dbReference type="PROSITE-ProRule" id="PRU00794"/>
    </source>
</evidence>
<evidence type="ECO:0000269" key="2">
    <source>
    </source>
</evidence>
<evidence type="ECO:0000303" key="3">
    <source>
    </source>
</evidence>
<evidence type="ECO:0000303" key="4">
    <source>
    </source>
</evidence>
<evidence type="ECO:0000305" key="5"/>
<evidence type="ECO:0000305" key="6">
    <source>
    </source>
</evidence>
<evidence type="ECO:0000312" key="7">
    <source>
        <dbReference type="HGNC" id="HGNC:26194"/>
    </source>
</evidence>
<evidence type="ECO:0007744" key="8">
    <source>
        <dbReference type="PDB" id="3GG6"/>
    </source>
</evidence>
<evidence type="ECO:0007744" key="9">
    <source>
        <dbReference type="PDB" id="4HVY"/>
    </source>
</evidence>
<evidence type="ECO:0007829" key="10">
    <source>
        <dbReference type="PDB" id="3GG6"/>
    </source>
</evidence>
<evidence type="ECO:0007829" key="11">
    <source>
        <dbReference type="PDB" id="4HVY"/>
    </source>
</evidence>
<comment type="function">
    <text evidence="2">Mediates the hydrolysis of oxidized nucleoside diphosphate derivatives. Hydrolyzes 8-oxo-7,8-dihydroguanine (8-oxo-Gua)-containing deoxyribo- and ribonucleoside diphosphates to the monophosphates. Hydrolyzes 8-oxo-dGDP and 8-oxo-GDP with the same efficiencies. Also hydrolyzes 8-OH-dADP and 2-OH-dADP. Exhibited no or minimal hydrolysis activity against 8-oxo-dGTP, 8-oxo-GTP, dGTP, GTP, dGDP and GDP. Probably removes oxidized guanine nucleotides from both the DNA and RNA precursor pools.</text>
</comment>
<comment type="catalytic activity">
    <reaction evidence="2">
        <text>8-oxo-dGDP + H2O = 8-oxo-dGMP + phosphate + H(+)</text>
        <dbReference type="Rhea" id="RHEA:32063"/>
        <dbReference type="ChEBI" id="CHEBI:15377"/>
        <dbReference type="ChEBI" id="CHEBI:15378"/>
        <dbReference type="ChEBI" id="CHEBI:43474"/>
        <dbReference type="ChEBI" id="CHEBI:63224"/>
        <dbReference type="ChEBI" id="CHEBI:63715"/>
        <dbReference type="EC" id="3.6.1.58"/>
    </reaction>
    <physiologicalReaction direction="left-to-right" evidence="6">
        <dbReference type="Rhea" id="RHEA:32064"/>
    </physiologicalReaction>
</comment>
<comment type="catalytic activity">
    <reaction evidence="2">
        <text>8-oxo-dADP + H2O = 8-oxo-dAMP + phosphate + H(+)</text>
        <dbReference type="Rhea" id="RHEA:35219"/>
        <dbReference type="ChEBI" id="CHEBI:15377"/>
        <dbReference type="ChEBI" id="CHEBI:15378"/>
        <dbReference type="ChEBI" id="CHEBI:43474"/>
        <dbReference type="ChEBI" id="CHEBI:71361"/>
        <dbReference type="ChEBI" id="CHEBI:71362"/>
    </reaction>
    <physiologicalReaction direction="left-to-right" evidence="6">
        <dbReference type="Rhea" id="RHEA:35220"/>
    </physiologicalReaction>
</comment>
<comment type="catalytic activity">
    <reaction evidence="2">
        <text>2-oxo-dADP + H2O = 2-oxo-dAMP + phosphate + H(+)</text>
        <dbReference type="Rhea" id="RHEA:35223"/>
        <dbReference type="ChEBI" id="CHEBI:15377"/>
        <dbReference type="ChEBI" id="CHEBI:15378"/>
        <dbReference type="ChEBI" id="CHEBI:43474"/>
        <dbReference type="ChEBI" id="CHEBI:63212"/>
        <dbReference type="ChEBI" id="CHEBI:71363"/>
    </reaction>
    <physiologicalReaction direction="left-to-right" evidence="6">
        <dbReference type="Rhea" id="RHEA:35224"/>
    </physiologicalReaction>
</comment>
<comment type="catalytic activity">
    <reaction evidence="6">
        <text>8-oxo-GDP + H2O = 8-oxo-GMP + phosphate + H(+)</text>
        <dbReference type="Rhea" id="RHEA:62356"/>
        <dbReference type="ChEBI" id="CHEBI:15377"/>
        <dbReference type="ChEBI" id="CHEBI:15378"/>
        <dbReference type="ChEBI" id="CHEBI:43474"/>
        <dbReference type="ChEBI" id="CHEBI:143554"/>
        <dbReference type="ChEBI" id="CHEBI:145694"/>
        <dbReference type="EC" id="3.6.1.58"/>
    </reaction>
    <physiologicalReaction direction="left-to-right" evidence="6">
        <dbReference type="Rhea" id="RHEA:62357"/>
    </physiologicalReaction>
</comment>
<comment type="cofactor">
    <cofactor evidence="2">
        <name>Mn(2+)</name>
        <dbReference type="ChEBI" id="CHEBI:29035"/>
    </cofactor>
    <cofactor evidence="2">
        <name>Mg(2+)</name>
        <dbReference type="ChEBI" id="CHEBI:18420"/>
    </cofactor>
</comment>
<comment type="biophysicochemical properties">
    <kinetics>
        <KM evidence="2">10.7 uM for 8-Oxo-dGDP</KM>
        <KM evidence="2">11.7 uM for 8-Oxo-GDP</KM>
        <Vmax evidence="2">212.0 pmol/min/ug enzyme toward 8-Oxo-dGDP (at 30 degrees Celsius)</Vmax>
        <Vmax evidence="2">246.0 pmol/min/ug enzyme toward 8-Oxo-GDP (at 30 degrees Celsius)</Vmax>
    </kinetics>
    <phDependence>
        <text evidence="2">Optimum pH is 8.5.</text>
    </phDependence>
</comment>
<comment type="interaction">
    <interactant intactId="EBI-740486">
        <id>Q6ZVK8</id>
    </interactant>
    <interactant intactId="EBI-359248">
        <id>Q96GX9</id>
        <label>APIP</label>
    </interactant>
    <organismsDiffer>false</organismsDiffer>
    <experiments>4</experiments>
</comment>
<comment type="interaction">
    <interactant intactId="EBI-740486">
        <id>Q6ZVK8</id>
    </interactant>
    <interactant intactId="EBI-741925">
        <id>P49366</id>
        <label>DHPS</label>
    </interactant>
    <organismsDiffer>false</organismsDiffer>
    <experiments>3</experiments>
</comment>
<comment type="interaction">
    <interactant intactId="EBI-740486">
        <id>Q6ZVK8</id>
    </interactant>
    <interactant intactId="EBI-353224">
        <id>P33316</id>
        <label>DUT</label>
    </interactant>
    <organismsDiffer>false</organismsDiffer>
    <experiments>3</experiments>
</comment>
<comment type="interaction">
    <interactant intactId="EBI-740486">
        <id>Q6ZVK8</id>
    </interactant>
    <interactant intactId="EBI-749523">
        <id>Q96CN4</id>
        <label>EVI5L</label>
    </interactant>
    <organismsDiffer>false</organismsDiffer>
    <experiments>3</experiments>
</comment>
<comment type="interaction">
    <interactant intactId="EBI-740486">
        <id>Q6ZVK8</id>
    </interactant>
    <interactant intactId="EBI-742664">
        <id>Q9BPX1</id>
        <label>HSD17B14</label>
    </interactant>
    <organismsDiffer>false</organismsDiffer>
    <experiments>3</experiments>
</comment>
<comment type="interaction">
    <interactant intactId="EBI-740486">
        <id>Q6ZVK8</id>
    </interactant>
    <interactant intactId="EBI-742084">
        <id>P49902</id>
        <label>NT5C2</label>
    </interactant>
    <organismsDiffer>false</organismsDiffer>
    <experiments>3</experiments>
</comment>
<comment type="interaction">
    <interactant intactId="EBI-740486">
        <id>Q6ZVK8</id>
    </interactant>
    <interactant intactId="EBI-712261">
        <id>P22234</id>
        <label>PAICS</label>
    </interactant>
    <organismsDiffer>false</organismsDiffer>
    <experiments>3</experiments>
</comment>
<comment type="interaction">
    <interactant intactId="EBI-740486">
        <id>Q6ZVK8</id>
    </interactant>
    <interactant intactId="EBI-743796">
        <id>Q8TBN0</id>
        <label>RAB3IL1</label>
    </interactant>
    <organismsDiffer>false</organismsDiffer>
    <experiments>3</experiments>
</comment>
<comment type="interaction">
    <interactant intactId="EBI-740486">
        <id>Q6ZVK8</id>
    </interactant>
    <interactant intactId="EBI-712367">
        <id>Q9UI14</id>
        <label>RABAC1</label>
    </interactant>
    <organismsDiffer>false</organismsDiffer>
    <experiments>3</experiments>
</comment>
<comment type="interaction">
    <interactant intactId="EBI-740486">
        <id>Q6ZVK8</id>
    </interactant>
    <interactant intactId="EBI-750109">
        <id>Q9NYB0</id>
        <label>TERF2IP</label>
    </interactant>
    <organismsDiffer>false</organismsDiffer>
    <experiments>2</experiments>
</comment>
<comment type="interaction">
    <interactant intactId="EBI-740486">
        <id>Q6ZVK8</id>
    </interactant>
    <interactant intactId="EBI-9676218">
        <id>P03410</id>
        <label>tax</label>
    </interactant>
    <organismsDiffer>true</organismsDiffer>
    <experiments>4</experiments>
</comment>
<comment type="interaction">
    <interactant intactId="EBI-740486">
        <id>Q6ZVK8</id>
    </interactant>
    <interactant intactId="EBI-9675698">
        <id>P14079</id>
        <label>tax</label>
    </interactant>
    <organismsDiffer>true</organismsDiffer>
    <experiments>5</experiments>
</comment>
<comment type="alternative products">
    <event type="alternative splicing"/>
    <isoform>
        <id>Q6ZVK8-1</id>
        <name>1</name>
        <sequence type="displayed"/>
    </isoform>
    <isoform>
        <id>Q6ZVK8-2</id>
        <name>2</name>
        <sequence type="described" ref="VSP_032276 VSP_032277"/>
    </isoform>
</comment>
<comment type="similarity">
    <text evidence="5">Belongs to the Nudix hydrolase family.</text>
</comment>
<comment type="sequence caution" evidence="5">
    <conflict type="erroneous initiation">
        <sequence resource="EMBL-CDS" id="BAC85853"/>
    </conflict>
    <text>Extended N-terminus.</text>
</comment>
<keyword id="KW-0002">3D-structure</keyword>
<keyword id="KW-0025">Alternative splicing</keyword>
<keyword id="KW-0378">Hydrolase</keyword>
<keyword id="KW-0460">Magnesium</keyword>
<keyword id="KW-0464">Manganese</keyword>
<keyword id="KW-0479">Metal-binding</keyword>
<keyword id="KW-0546">Nucleotide metabolism</keyword>
<keyword id="KW-1267">Proteomics identification</keyword>
<keyword id="KW-1185">Reference proteome</keyword>
<sequence>MASEGLAGALASVLAGQGSSVHSCDSAPAGEPPAPVRLRKNVCYVVLAVFLSEQDEVLLIQEAKRECRGSWYLPAGRMEPGETIVEALQREVKEEAGLHCEPETLLSVEERGPSWVRFVFLARPTGGILKTSKEADAESLQAAWYPRTSLPTPLRAHDILHLVELAAQYRQQARHPLILPQELPCDLVCQRLVATFTSAQTVWVLVGTVGMPHLPVTACGLDPMEQRGGMKMAVLRLLQECLTLHHLVVEIKGLLGLQHLGRDHSDGICLNVLVTVAFRSPGIQDEPPKVRGENFSWWKVMEEDLQSQLLQRLQGSSVVPVNR</sequence>
<gene>
    <name evidence="7" type="primary">NUDT18</name>
    <name evidence="4" type="synonym">MTH3</name>
</gene>
<accession>Q6ZVK8</accession>
<accession>Q8IZ75</accession>
<accession>Q9H687</accession>
<proteinExistence type="evidence at protein level"/>